<evidence type="ECO:0000255" key="1">
    <source>
        <dbReference type="HAMAP-Rule" id="MF_00564"/>
    </source>
</evidence>
<feature type="chain" id="PRO_1000129389" description="Ribonuclease PH">
    <location>
        <begin position="1"/>
        <end position="241"/>
    </location>
</feature>
<feature type="binding site" evidence="1">
    <location>
        <position position="89"/>
    </location>
    <ligand>
        <name>phosphate</name>
        <dbReference type="ChEBI" id="CHEBI:43474"/>
        <note>substrate</note>
    </ligand>
</feature>
<feature type="binding site" evidence="1">
    <location>
        <begin position="127"/>
        <end position="129"/>
    </location>
    <ligand>
        <name>phosphate</name>
        <dbReference type="ChEBI" id="CHEBI:43474"/>
        <note>substrate</note>
    </ligand>
</feature>
<accession>B2IA38</accession>
<keyword id="KW-0548">Nucleotidyltransferase</keyword>
<keyword id="KW-0694">RNA-binding</keyword>
<keyword id="KW-0698">rRNA processing</keyword>
<keyword id="KW-0808">Transferase</keyword>
<keyword id="KW-0819">tRNA processing</keyword>
<keyword id="KW-0820">tRNA-binding</keyword>
<organism>
    <name type="scientific">Xylella fastidiosa (strain M23)</name>
    <dbReference type="NCBI Taxonomy" id="405441"/>
    <lineage>
        <taxon>Bacteria</taxon>
        <taxon>Pseudomonadati</taxon>
        <taxon>Pseudomonadota</taxon>
        <taxon>Gammaproteobacteria</taxon>
        <taxon>Lysobacterales</taxon>
        <taxon>Lysobacteraceae</taxon>
        <taxon>Xylella</taxon>
    </lineage>
</organism>
<protein>
    <recommendedName>
        <fullName evidence="1">Ribonuclease PH</fullName>
        <shortName evidence="1">RNase PH</shortName>
        <ecNumber evidence="1">2.7.7.56</ecNumber>
    </recommendedName>
    <alternativeName>
        <fullName evidence="1">tRNA nucleotidyltransferase</fullName>
    </alternativeName>
</protein>
<comment type="function">
    <text evidence="1">Phosphorolytic 3'-5' exoribonuclease that plays an important role in tRNA 3'-end maturation. Removes nucleotide residues following the 3'-CCA terminus of tRNAs; can also add nucleotides to the ends of RNA molecules by using nucleoside diphosphates as substrates, but this may not be physiologically important. Probably plays a role in initiation of 16S rRNA degradation (leading to ribosome degradation) during starvation.</text>
</comment>
<comment type="catalytic activity">
    <reaction evidence="1">
        <text>tRNA(n+1) + phosphate = tRNA(n) + a ribonucleoside 5'-diphosphate</text>
        <dbReference type="Rhea" id="RHEA:10628"/>
        <dbReference type="Rhea" id="RHEA-COMP:17343"/>
        <dbReference type="Rhea" id="RHEA-COMP:17344"/>
        <dbReference type="ChEBI" id="CHEBI:43474"/>
        <dbReference type="ChEBI" id="CHEBI:57930"/>
        <dbReference type="ChEBI" id="CHEBI:173114"/>
        <dbReference type="EC" id="2.7.7.56"/>
    </reaction>
</comment>
<comment type="subunit">
    <text evidence="1">Homohexameric ring arranged as a trimer of dimers.</text>
</comment>
<comment type="similarity">
    <text evidence="1">Belongs to the RNase PH family.</text>
</comment>
<sequence length="241" mass="26215">MNVSRPSGRQADALRPVRIERAFTCHAEGSVLVSFGNTLVVCTASVEAKVPVFLRNKGEGWITAEYGMLPRSTHTRSEREAARGKQAGRTLEIQRLIGRALRTCVDRTALGERTITLDCDVLQADGGTRTAAITGAYVALVDAVRCLEQRGQLKKSPLIGAVAAVSVGIYRGMPVLDLDYPEDSDCDTDMNVVMNDEGGFIELQGTAEQQAFRRGELDMLLALAERGTAMLFDIQREALAR</sequence>
<reference key="1">
    <citation type="journal article" date="2010" name="J. Bacteriol.">
        <title>Whole genome sequences of two Xylella fastidiosa strains (M12 and M23) causing almond leaf scorch disease in California.</title>
        <authorList>
            <person name="Chen J."/>
            <person name="Xie G."/>
            <person name="Han S."/>
            <person name="Chertkov O."/>
            <person name="Sims D."/>
            <person name="Civerolo E.L."/>
        </authorList>
    </citation>
    <scope>NUCLEOTIDE SEQUENCE [LARGE SCALE GENOMIC DNA]</scope>
    <source>
        <strain>M23</strain>
    </source>
</reference>
<gene>
    <name evidence="1" type="primary">rph</name>
    <name type="ordered locus">XfasM23_0758</name>
</gene>
<name>RNPH_XYLF2</name>
<dbReference type="EC" id="2.7.7.56" evidence="1"/>
<dbReference type="EMBL" id="CP001011">
    <property type="protein sequence ID" value="ACB92197.1"/>
    <property type="molecule type" value="Genomic_DNA"/>
</dbReference>
<dbReference type="RefSeq" id="WP_004083697.1">
    <property type="nucleotide sequence ID" value="NC_010577.1"/>
</dbReference>
<dbReference type="SMR" id="B2IA38"/>
<dbReference type="GeneID" id="93904502"/>
<dbReference type="KEGG" id="xfn:XfasM23_0758"/>
<dbReference type="HOGENOM" id="CLU_050858_0_0_6"/>
<dbReference type="Proteomes" id="UP000001698">
    <property type="component" value="Chromosome"/>
</dbReference>
<dbReference type="GO" id="GO:0000175">
    <property type="term" value="F:3'-5'-RNA exonuclease activity"/>
    <property type="evidence" value="ECO:0007669"/>
    <property type="project" value="UniProtKB-UniRule"/>
</dbReference>
<dbReference type="GO" id="GO:0000049">
    <property type="term" value="F:tRNA binding"/>
    <property type="evidence" value="ECO:0007669"/>
    <property type="project" value="UniProtKB-UniRule"/>
</dbReference>
<dbReference type="GO" id="GO:0009022">
    <property type="term" value="F:tRNA nucleotidyltransferase activity"/>
    <property type="evidence" value="ECO:0007669"/>
    <property type="project" value="UniProtKB-UniRule"/>
</dbReference>
<dbReference type="GO" id="GO:0016075">
    <property type="term" value="P:rRNA catabolic process"/>
    <property type="evidence" value="ECO:0007669"/>
    <property type="project" value="UniProtKB-UniRule"/>
</dbReference>
<dbReference type="GO" id="GO:0006364">
    <property type="term" value="P:rRNA processing"/>
    <property type="evidence" value="ECO:0007669"/>
    <property type="project" value="UniProtKB-KW"/>
</dbReference>
<dbReference type="GO" id="GO:0008033">
    <property type="term" value="P:tRNA processing"/>
    <property type="evidence" value="ECO:0007669"/>
    <property type="project" value="UniProtKB-UniRule"/>
</dbReference>
<dbReference type="CDD" id="cd11362">
    <property type="entry name" value="RNase_PH_bact"/>
    <property type="match status" value="1"/>
</dbReference>
<dbReference type="FunFam" id="3.30.230.70:FF:000003">
    <property type="entry name" value="Ribonuclease PH"/>
    <property type="match status" value="1"/>
</dbReference>
<dbReference type="Gene3D" id="3.30.230.70">
    <property type="entry name" value="GHMP Kinase, N-terminal domain"/>
    <property type="match status" value="1"/>
</dbReference>
<dbReference type="HAMAP" id="MF_00564">
    <property type="entry name" value="RNase_PH"/>
    <property type="match status" value="1"/>
</dbReference>
<dbReference type="InterPro" id="IPR001247">
    <property type="entry name" value="ExoRNase_PH_dom1"/>
</dbReference>
<dbReference type="InterPro" id="IPR015847">
    <property type="entry name" value="ExoRNase_PH_dom2"/>
</dbReference>
<dbReference type="InterPro" id="IPR036345">
    <property type="entry name" value="ExoRNase_PH_dom2_sf"/>
</dbReference>
<dbReference type="InterPro" id="IPR027408">
    <property type="entry name" value="PNPase/RNase_PH_dom_sf"/>
</dbReference>
<dbReference type="InterPro" id="IPR020568">
    <property type="entry name" value="Ribosomal_Su5_D2-typ_SF"/>
</dbReference>
<dbReference type="InterPro" id="IPR050080">
    <property type="entry name" value="RNase_PH"/>
</dbReference>
<dbReference type="InterPro" id="IPR002381">
    <property type="entry name" value="RNase_PH_bac-type"/>
</dbReference>
<dbReference type="InterPro" id="IPR018336">
    <property type="entry name" value="RNase_PH_CS"/>
</dbReference>
<dbReference type="NCBIfam" id="TIGR01966">
    <property type="entry name" value="RNasePH"/>
    <property type="match status" value="1"/>
</dbReference>
<dbReference type="PANTHER" id="PTHR11953">
    <property type="entry name" value="EXOSOME COMPLEX COMPONENT"/>
    <property type="match status" value="1"/>
</dbReference>
<dbReference type="PANTHER" id="PTHR11953:SF0">
    <property type="entry name" value="EXOSOME COMPLEX COMPONENT RRP41"/>
    <property type="match status" value="1"/>
</dbReference>
<dbReference type="Pfam" id="PF01138">
    <property type="entry name" value="RNase_PH"/>
    <property type="match status" value="1"/>
</dbReference>
<dbReference type="Pfam" id="PF03725">
    <property type="entry name" value="RNase_PH_C"/>
    <property type="match status" value="1"/>
</dbReference>
<dbReference type="SUPFAM" id="SSF55666">
    <property type="entry name" value="Ribonuclease PH domain 2-like"/>
    <property type="match status" value="1"/>
</dbReference>
<dbReference type="SUPFAM" id="SSF54211">
    <property type="entry name" value="Ribosomal protein S5 domain 2-like"/>
    <property type="match status" value="1"/>
</dbReference>
<dbReference type="PROSITE" id="PS01277">
    <property type="entry name" value="RIBONUCLEASE_PH"/>
    <property type="match status" value="1"/>
</dbReference>
<proteinExistence type="inferred from homology"/>